<sequence length="179" mass="20112">MARLRKHYDTVVKPALQKEFNYANPMQVPKLQKIVINMGVGEAAQDSKKIESALAELTLISGQKPVSTKAKMSIAQFKLREGQVVGCKVTLRAERMYEFLDRLINIALPRVRDFRGVPGKSFDGRGNYSLGLKEQIVFPEIDYDKVETIRGMDIIFVTTAKSNEEAKALLKGFDMPFVA</sequence>
<keyword id="KW-0687">Ribonucleoprotein</keyword>
<keyword id="KW-0689">Ribosomal protein</keyword>
<keyword id="KW-0694">RNA-binding</keyword>
<keyword id="KW-0699">rRNA-binding</keyword>
<keyword id="KW-0820">tRNA-binding</keyword>
<gene>
    <name evidence="1" type="primary">rplE</name>
    <name type="ordered locus">amb3118</name>
</gene>
<evidence type="ECO:0000255" key="1">
    <source>
        <dbReference type="HAMAP-Rule" id="MF_01333"/>
    </source>
</evidence>
<evidence type="ECO:0000305" key="2"/>
<protein>
    <recommendedName>
        <fullName evidence="1">Large ribosomal subunit protein uL5</fullName>
    </recommendedName>
    <alternativeName>
        <fullName evidence="2">50S ribosomal protein L5</fullName>
    </alternativeName>
</protein>
<comment type="function">
    <text evidence="1">This is one of the proteins that bind and probably mediate the attachment of the 5S RNA into the large ribosomal subunit, where it forms part of the central protuberance. In the 70S ribosome it contacts protein S13 of the 30S subunit (bridge B1b), connecting the 2 subunits; this bridge is implicated in subunit movement. Contacts the P site tRNA; the 5S rRNA and some of its associated proteins might help stabilize positioning of ribosome-bound tRNAs.</text>
</comment>
<comment type="subunit">
    <text evidence="1">Part of the 50S ribosomal subunit; part of the 5S rRNA/L5/L18/L25 subcomplex. Contacts the 5S rRNA and the P site tRNA. Forms a bridge to the 30S subunit in the 70S ribosome.</text>
</comment>
<comment type="similarity">
    <text evidence="1">Belongs to the universal ribosomal protein uL5 family.</text>
</comment>
<dbReference type="EMBL" id="AP007255">
    <property type="protein sequence ID" value="BAE51922.1"/>
    <property type="molecule type" value="Genomic_DNA"/>
</dbReference>
<dbReference type="RefSeq" id="WP_011385492.1">
    <property type="nucleotide sequence ID" value="NC_007626.1"/>
</dbReference>
<dbReference type="SMR" id="Q2W2K3"/>
<dbReference type="STRING" id="342108.amb3118"/>
<dbReference type="KEGG" id="mag:amb3118"/>
<dbReference type="HOGENOM" id="CLU_061015_2_1_5"/>
<dbReference type="OrthoDB" id="9806626at2"/>
<dbReference type="Proteomes" id="UP000007058">
    <property type="component" value="Chromosome"/>
</dbReference>
<dbReference type="GO" id="GO:1990904">
    <property type="term" value="C:ribonucleoprotein complex"/>
    <property type="evidence" value="ECO:0007669"/>
    <property type="project" value="UniProtKB-KW"/>
</dbReference>
<dbReference type="GO" id="GO:0005840">
    <property type="term" value="C:ribosome"/>
    <property type="evidence" value="ECO:0007669"/>
    <property type="project" value="UniProtKB-KW"/>
</dbReference>
<dbReference type="GO" id="GO:0019843">
    <property type="term" value="F:rRNA binding"/>
    <property type="evidence" value="ECO:0007669"/>
    <property type="project" value="UniProtKB-UniRule"/>
</dbReference>
<dbReference type="GO" id="GO:0003735">
    <property type="term" value="F:structural constituent of ribosome"/>
    <property type="evidence" value="ECO:0007669"/>
    <property type="project" value="InterPro"/>
</dbReference>
<dbReference type="GO" id="GO:0000049">
    <property type="term" value="F:tRNA binding"/>
    <property type="evidence" value="ECO:0007669"/>
    <property type="project" value="UniProtKB-UniRule"/>
</dbReference>
<dbReference type="GO" id="GO:0006412">
    <property type="term" value="P:translation"/>
    <property type="evidence" value="ECO:0007669"/>
    <property type="project" value="UniProtKB-UniRule"/>
</dbReference>
<dbReference type="FunFam" id="3.30.1440.10:FF:000001">
    <property type="entry name" value="50S ribosomal protein L5"/>
    <property type="match status" value="1"/>
</dbReference>
<dbReference type="Gene3D" id="3.30.1440.10">
    <property type="match status" value="1"/>
</dbReference>
<dbReference type="HAMAP" id="MF_01333_B">
    <property type="entry name" value="Ribosomal_uL5_B"/>
    <property type="match status" value="1"/>
</dbReference>
<dbReference type="InterPro" id="IPR002132">
    <property type="entry name" value="Ribosomal_uL5"/>
</dbReference>
<dbReference type="InterPro" id="IPR020930">
    <property type="entry name" value="Ribosomal_uL5_bac-type"/>
</dbReference>
<dbReference type="InterPro" id="IPR031309">
    <property type="entry name" value="Ribosomal_uL5_C"/>
</dbReference>
<dbReference type="InterPro" id="IPR020929">
    <property type="entry name" value="Ribosomal_uL5_CS"/>
</dbReference>
<dbReference type="InterPro" id="IPR022803">
    <property type="entry name" value="Ribosomal_uL5_dom_sf"/>
</dbReference>
<dbReference type="InterPro" id="IPR031310">
    <property type="entry name" value="Ribosomal_uL5_N"/>
</dbReference>
<dbReference type="NCBIfam" id="NF000585">
    <property type="entry name" value="PRK00010.1"/>
    <property type="match status" value="1"/>
</dbReference>
<dbReference type="PANTHER" id="PTHR11994">
    <property type="entry name" value="60S RIBOSOMAL PROTEIN L11-RELATED"/>
    <property type="match status" value="1"/>
</dbReference>
<dbReference type="Pfam" id="PF00281">
    <property type="entry name" value="Ribosomal_L5"/>
    <property type="match status" value="1"/>
</dbReference>
<dbReference type="Pfam" id="PF00673">
    <property type="entry name" value="Ribosomal_L5_C"/>
    <property type="match status" value="1"/>
</dbReference>
<dbReference type="PIRSF" id="PIRSF002161">
    <property type="entry name" value="Ribosomal_L5"/>
    <property type="match status" value="1"/>
</dbReference>
<dbReference type="SUPFAM" id="SSF55282">
    <property type="entry name" value="RL5-like"/>
    <property type="match status" value="1"/>
</dbReference>
<dbReference type="PROSITE" id="PS00358">
    <property type="entry name" value="RIBOSOMAL_L5"/>
    <property type="match status" value="1"/>
</dbReference>
<proteinExistence type="inferred from homology"/>
<accession>Q2W2K3</accession>
<feature type="chain" id="PRO_0000243017" description="Large ribosomal subunit protein uL5">
    <location>
        <begin position="1"/>
        <end position="179"/>
    </location>
</feature>
<reference key="1">
    <citation type="journal article" date="2005" name="DNA Res.">
        <title>Complete genome sequence of the facultative anaerobic magnetotactic bacterium Magnetospirillum sp. strain AMB-1.</title>
        <authorList>
            <person name="Matsunaga T."/>
            <person name="Okamura Y."/>
            <person name="Fukuda Y."/>
            <person name="Wahyudi A.T."/>
            <person name="Murase Y."/>
            <person name="Takeyama H."/>
        </authorList>
    </citation>
    <scope>NUCLEOTIDE SEQUENCE [LARGE SCALE GENOMIC DNA]</scope>
    <source>
        <strain>ATCC 700264 / AMB-1</strain>
    </source>
</reference>
<name>RL5_PARM1</name>
<organism>
    <name type="scientific">Paramagnetospirillum magneticum (strain ATCC 700264 / AMB-1)</name>
    <name type="common">Magnetospirillum magneticum</name>
    <dbReference type="NCBI Taxonomy" id="342108"/>
    <lineage>
        <taxon>Bacteria</taxon>
        <taxon>Pseudomonadati</taxon>
        <taxon>Pseudomonadota</taxon>
        <taxon>Alphaproteobacteria</taxon>
        <taxon>Rhodospirillales</taxon>
        <taxon>Magnetospirillaceae</taxon>
        <taxon>Paramagnetospirillum</taxon>
    </lineage>
</organism>